<gene>
    <name evidence="15" type="primary">rsks-1</name>
    <name evidence="15" type="ORF">Y47D3A.16</name>
</gene>
<feature type="chain" id="PRO_0000435314" description="Ribosomal protein S6 kinase beta" evidence="11">
    <location>
        <begin position="1"/>
        <end position="550"/>
    </location>
</feature>
<feature type="domain" description="Protein kinase" evidence="2">
    <location>
        <begin position="83"/>
        <end position="344"/>
    </location>
</feature>
<feature type="domain" description="AGC-kinase C-terminal" evidence="3">
    <location>
        <begin position="345"/>
        <end position="415"/>
    </location>
</feature>
<feature type="region of interest" description="Disordered" evidence="4">
    <location>
        <begin position="433"/>
        <end position="466"/>
    </location>
</feature>
<feature type="region of interest" description="Disordered" evidence="4">
    <location>
        <begin position="484"/>
        <end position="550"/>
    </location>
</feature>
<feature type="compositionally biased region" description="Low complexity" evidence="4">
    <location>
        <begin position="520"/>
        <end position="534"/>
    </location>
</feature>
<feature type="active site" description="Proton acceptor" evidence="2">
    <location>
        <position position="210"/>
    </location>
</feature>
<feature type="binding site" evidence="2">
    <location>
        <begin position="89"/>
        <end position="97"/>
    </location>
    <ligand>
        <name>ATP</name>
        <dbReference type="ChEBI" id="CHEBI:30616"/>
    </ligand>
</feature>
<feature type="binding site" evidence="2">
    <location>
        <position position="115"/>
    </location>
    <ligand>
        <name>ATP</name>
        <dbReference type="ChEBI" id="CHEBI:30616"/>
    </ligand>
</feature>
<feature type="modified residue" description="Phosphothreonine" evidence="12 13">
    <location>
        <position position="404"/>
    </location>
</feature>
<feature type="modified residue" description="Phosphoserine" evidence="13">
    <location>
        <position position="439"/>
    </location>
</feature>
<feature type="mutagenesis site" description="Probable loss of kinase activity. Enhanced axonal regrowth following axotomy of PLM neurons." evidence="10">
    <original>K</original>
    <variation>Q</variation>
    <location>
        <position position="115"/>
    </location>
</feature>
<feature type="mutagenesis site" description="Abolishes phosphorylation and causes a decrease in the number of germline progenitors." evidence="6">
    <original>T</original>
    <variation>A</variation>
    <location>
        <position position="404"/>
    </location>
</feature>
<feature type="mutagenesis site" description="Phosphomimetic mutant which inhibits axon regrowth following axotomy of PLM neurons." evidence="10">
    <original>T</original>
    <variation>E</variation>
    <location>
        <position position="404"/>
    </location>
</feature>
<feature type="mutagenesis site" description="Phosphomimetic mutant which inhibits axon regrowth following axotomy of PLM neurons." evidence="10">
    <original>S</original>
    <variation>D</variation>
    <location>
        <position position="439"/>
    </location>
</feature>
<accession>Q9NAH6</accession>
<protein>
    <recommendedName>
        <fullName evidence="11">Ribosomal protein S6 kinase beta</fullName>
        <ecNumber evidence="1">2.7.11.1</ecNumber>
    </recommendedName>
</protein>
<evidence type="ECO:0000255" key="1">
    <source>
        <dbReference type="PIRNR" id="PIRNR000605"/>
    </source>
</evidence>
<evidence type="ECO:0000255" key="2">
    <source>
        <dbReference type="PROSITE-ProRule" id="PRU00159"/>
    </source>
</evidence>
<evidence type="ECO:0000255" key="3">
    <source>
        <dbReference type="PROSITE-ProRule" id="PRU00618"/>
    </source>
</evidence>
<evidence type="ECO:0000256" key="4">
    <source>
        <dbReference type="SAM" id="MobiDB-lite"/>
    </source>
</evidence>
<evidence type="ECO:0000269" key="5">
    <source>
    </source>
</evidence>
<evidence type="ECO:0000269" key="6">
    <source>
    </source>
</evidence>
<evidence type="ECO:0000269" key="7">
    <source>
    </source>
</evidence>
<evidence type="ECO:0000269" key="8">
    <source>
    </source>
</evidence>
<evidence type="ECO:0000269" key="9">
    <source>
    </source>
</evidence>
<evidence type="ECO:0000269" key="10">
    <source>
    </source>
</evidence>
<evidence type="ECO:0000305" key="11"/>
<evidence type="ECO:0000305" key="12">
    <source>
    </source>
</evidence>
<evidence type="ECO:0000305" key="13">
    <source>
    </source>
</evidence>
<evidence type="ECO:0000312" key="14">
    <source>
        <dbReference type="Proteomes" id="UP000001940"/>
    </source>
</evidence>
<evidence type="ECO:0000312" key="15">
    <source>
        <dbReference type="WormBase" id="Y47D3A.16"/>
    </source>
</evidence>
<comment type="function">
    <text evidence="5 6 7 8 9 10">Serine/threonine-protein kinase which regulates mRNA translation (PubMed:17266680). Negatively regulates lifespan and resistance to starvation, oxidative stress, protein aggregation and P.aeruginosa-mediated infection (PubMed:17266680, PubMed:23879233, PubMed:24332851). May regulate these processes by preventing the activation of transcription factor hif-1 (PubMed:23879233). Required, probably downstream of let-363/TOR, for the establishment of the proper number of germline progenitors by promoting cell cycle progression and preventing differentiation during larval development. Regulates germ cell size (PubMed:22278922). In addition required for sperm production and embryo viability (PubMed:17266680, PubMed:22278922). Involved in axon regeneration of PLM and ALM neurons by inhibiting growth cone formation early after axotomy and later by inhibiting axon extension. Functions in axon regeneration and lifespan probably by preventing aak-2/AMPK activation (PubMed:24332851, PubMed:24431434). Negatively regulates autophagy (PubMed:22560223).</text>
</comment>
<comment type="catalytic activity">
    <reaction evidence="1">
        <text>L-seryl-[protein] + ATP = O-phospho-L-seryl-[protein] + ADP + H(+)</text>
        <dbReference type="Rhea" id="RHEA:17989"/>
        <dbReference type="Rhea" id="RHEA-COMP:9863"/>
        <dbReference type="Rhea" id="RHEA-COMP:11604"/>
        <dbReference type="ChEBI" id="CHEBI:15378"/>
        <dbReference type="ChEBI" id="CHEBI:29999"/>
        <dbReference type="ChEBI" id="CHEBI:30616"/>
        <dbReference type="ChEBI" id="CHEBI:83421"/>
        <dbReference type="ChEBI" id="CHEBI:456216"/>
        <dbReference type="EC" id="2.7.11.1"/>
    </reaction>
</comment>
<comment type="catalytic activity">
    <reaction evidence="1">
        <text>L-threonyl-[protein] + ATP = O-phospho-L-threonyl-[protein] + ADP + H(+)</text>
        <dbReference type="Rhea" id="RHEA:46608"/>
        <dbReference type="Rhea" id="RHEA-COMP:11060"/>
        <dbReference type="Rhea" id="RHEA-COMP:11605"/>
        <dbReference type="ChEBI" id="CHEBI:15378"/>
        <dbReference type="ChEBI" id="CHEBI:30013"/>
        <dbReference type="ChEBI" id="CHEBI:30616"/>
        <dbReference type="ChEBI" id="CHEBI:61977"/>
        <dbReference type="ChEBI" id="CHEBI:456216"/>
        <dbReference type="EC" id="2.7.11.1"/>
    </reaction>
</comment>
<comment type="cofactor">
    <cofactor evidence="11">
        <name>Mg(2+)</name>
        <dbReference type="ChEBI" id="CHEBI:18420"/>
    </cofactor>
</comment>
<comment type="subcellular location">
    <subcellularLocation>
        <location evidence="10">Cell projection</location>
        <location evidence="10">Axon</location>
    </subcellularLocation>
    <subcellularLocation>
        <location evidence="10">Perikaryon</location>
    </subcellularLocation>
    <text evidence="10">Enriched in the synaptic branch of PLM neurons.</text>
</comment>
<comment type="PTM">
    <text evidence="12">May be phosphorylated on Thr-404 by let-363/TOR.</text>
</comment>
<comment type="disruption phenotype">
    <text evidence="5 6 7 9">RNAi-mediated knockdown causes an increased lifespan and resistance to starvation, slower growth and a decrease in brood size (PubMed:17266680). Causes a decrease in the number of germline progenitors (PubMed:22278922). RNAi-mediated knockdown in adults causes increase in lgg-1 positive autophagic vesicles (PubMed:22560223). RNAi-mediated knockdown in a daf-2 e1370 mutant background results in daf-16-mediated up-regulation of stdh-1 reporter expression in the intestine and a synergistic increase in lifespan. RNAi-mediated knockdown in germ line, hypodermis and to a lesser extent in intestine and daf-2 e1370 mutant background causes a synergistic increase in lifespan (PubMed:24332851).</text>
</comment>
<comment type="similarity">
    <text evidence="1">Belongs to the protein kinase superfamily. AGC Ser/Thr protein kinase family. S6 kinase subfamily.</text>
</comment>
<sequence>MADVFEFELEGHESQASPQRHAYHYDNCTEIMEDDHMYSNVADGQISAPPPSSSYMEDPMMESIQLCASAINPPNVRVGPEDFQLLKVLGKGGYGKVFQVRKTTGSDNGQIFAMKVLQKATIVRNQKDTAHTKAERNILEAVKSPFICDLLYAFQTGGKLYLILEYLSGGELFMHLEREGMFMENVAKFYLSEIVVSLEHLHQQGIIYRDLKPENILLDAYGHVKLTDFGLCKEEIEGDQKTHTFCGTIEYMAPEILMRCGHGKAVDWWSLGALMFDMLTGGPPFTAENRRKTIDKILKGRLTLPAYLSNEARDLIKKLLKRHVDTRLGAGLSDAEEIKSHAFFKTTDWNLVYARQLEAPFKPNIENDEDTSLFDARFTKMTPVDSPCETNFSLNGDNPFVGFTYVAPSVLEMMNKGGHGGISVAHLASSMSRAGAAKSPRKPGDPETASILHGGHSNLFGHGPNSEAPQAFGYGIGSQMTTTTAGGAGIQQPYQSFSGGYPEDDAMDTSTPRASESRETTTGNGSTTTTRPSNVGSSASTPIPLPKRVM</sequence>
<reference evidence="14" key="1">
    <citation type="journal article" date="1998" name="Science">
        <title>Genome sequence of the nematode C. elegans: a platform for investigating biology.</title>
        <authorList>
            <consortium name="The C. elegans sequencing consortium"/>
        </authorList>
    </citation>
    <scope>NUCLEOTIDE SEQUENCE [LARGE SCALE GENOMIC DNA]</scope>
    <source>
        <strain evidence="14">Bristol N2</strain>
    </source>
</reference>
<reference evidence="11" key="2">
    <citation type="journal article" date="2007" name="Aging Cell">
        <title>Inhibition of mRNA translation extends lifespan in Caenorhabditis elegans.</title>
        <authorList>
            <person name="Pan K.Z."/>
            <person name="Palter J.E."/>
            <person name="Rogers A.N."/>
            <person name="Olsen A."/>
            <person name="Chen D."/>
            <person name="Lithgow G.J."/>
            <person name="Kapahi P."/>
        </authorList>
    </citation>
    <scope>FUNCTION</scope>
    <scope>DISRUPTION PHENOTYPE</scope>
</reference>
<reference evidence="11" key="3">
    <citation type="journal article" date="2012" name="Cell Metab.">
        <title>TOR signaling and rapamycin influence longevity by regulating SKN-1/Nrf and DAF-16/FoxO.</title>
        <authorList>
            <person name="Robida-Stubbs S."/>
            <person name="Glover-Cutter K."/>
            <person name="Lamming D.W."/>
            <person name="Mizunuma M."/>
            <person name="Narasimhan S.D."/>
            <person name="Neumann-Haefelin E."/>
            <person name="Sabatini D.M."/>
            <person name="Blackwell T.K."/>
        </authorList>
    </citation>
    <scope>FUNCTION</scope>
    <scope>DISRUPTION PHENOTYPE</scope>
</reference>
<reference evidence="11" key="4">
    <citation type="journal article" date="2012" name="Development">
        <title>S6K links cell fate, cell cycle and nutrient response in C. elegans germline stem/progenitor cells.</title>
        <authorList>
            <person name="Korta D.Z."/>
            <person name="Tuck S."/>
            <person name="Hubbard E.J."/>
        </authorList>
    </citation>
    <scope>FUNCTION</scope>
    <scope>DISRUPTION PHENOTYPE</scope>
    <scope>PHOSPHORYLATION AT THR-404</scope>
    <scope>MUTAGENESIS OF THR-404</scope>
</reference>
<reference evidence="11" key="5">
    <citation type="journal article" date="2013" name="Aging Cell">
        <title>Heat shock factor 1 mediates the longevity conferred by inhibition of TOR and insulin/IGF-1 signaling pathways in C. elegans.</title>
        <authorList>
            <person name="Seo K."/>
            <person name="Choi E."/>
            <person name="Lee D."/>
            <person name="Jeong D.E."/>
            <person name="Jang S.K."/>
            <person name="Lee S.J."/>
        </authorList>
    </citation>
    <scope>FUNCTION</scope>
</reference>
<reference evidence="11" key="6">
    <citation type="journal article" date="2013" name="Cell Rep.">
        <title>Germline signaling mediates the synergistically prolonged longevity produced by double mutations in daf-2 and rsks-1 in C. elegans.</title>
        <authorList>
            <person name="Chen D."/>
            <person name="Li P.W."/>
            <person name="Goldstein B.A."/>
            <person name="Cai W."/>
            <person name="Thomas E.L."/>
            <person name="Chen F."/>
            <person name="Hubbard A.E."/>
            <person name="Melov S."/>
            <person name="Kapahi P."/>
        </authorList>
    </citation>
    <scope>FUNCTION</scope>
    <scope>DISRUPTION PHENOTYPE</scope>
</reference>
<reference evidence="11" key="7">
    <citation type="journal article" date="2014" name="J. Neurosci.">
        <title>S6 kinase inhibits intrinsic axon regeneration capacity via AMP kinase in Caenorhabditis elegans.</title>
        <authorList>
            <person name="Hubert T."/>
            <person name="Wu Z."/>
            <person name="Chisholm A.D."/>
            <person name="Jin Y."/>
        </authorList>
    </citation>
    <scope>FUNCTION</scope>
    <scope>SUBCELLULAR LOCATION</scope>
    <scope>PHOSPHORYLATION AT THR-404 AND SER-439</scope>
    <scope>MUTAGENESIS OF LYS-115; THR-404 AND SER-439</scope>
</reference>
<keyword id="KW-0067">ATP-binding</keyword>
<keyword id="KW-0966">Cell projection</keyword>
<keyword id="KW-0418">Kinase</keyword>
<keyword id="KW-0460">Magnesium</keyword>
<keyword id="KW-0479">Metal-binding</keyword>
<keyword id="KW-0547">Nucleotide-binding</keyword>
<keyword id="KW-0597">Phosphoprotein</keyword>
<keyword id="KW-1185">Reference proteome</keyword>
<keyword id="KW-0723">Serine/threonine-protein kinase</keyword>
<keyword id="KW-0808">Transferase</keyword>
<organism evidence="14">
    <name type="scientific">Caenorhabditis elegans</name>
    <dbReference type="NCBI Taxonomy" id="6239"/>
    <lineage>
        <taxon>Eukaryota</taxon>
        <taxon>Metazoa</taxon>
        <taxon>Ecdysozoa</taxon>
        <taxon>Nematoda</taxon>
        <taxon>Chromadorea</taxon>
        <taxon>Rhabditida</taxon>
        <taxon>Rhabditina</taxon>
        <taxon>Rhabditomorpha</taxon>
        <taxon>Rhabditoidea</taxon>
        <taxon>Rhabditidae</taxon>
        <taxon>Peloderinae</taxon>
        <taxon>Caenorhabditis</taxon>
    </lineage>
</organism>
<proteinExistence type="evidence at protein level"/>
<dbReference type="EC" id="2.7.11.1" evidence="1"/>
<dbReference type="EMBL" id="BX284603">
    <property type="protein sequence ID" value="CAB55075.2"/>
    <property type="molecule type" value="Genomic_DNA"/>
</dbReference>
<dbReference type="RefSeq" id="NP_499447.2">
    <property type="nucleotide sequence ID" value="NM_067046.4"/>
</dbReference>
<dbReference type="SMR" id="Q9NAH6"/>
<dbReference type="FunCoup" id="Q9NAH6">
    <property type="interactions" value="2749"/>
</dbReference>
<dbReference type="STRING" id="6239.Y47D3A.16.1"/>
<dbReference type="iPTMnet" id="Q9NAH6"/>
<dbReference type="PaxDb" id="6239-Y47D3A.16"/>
<dbReference type="PeptideAtlas" id="Q9NAH6"/>
<dbReference type="EnsemblMetazoa" id="Y47D3A.16.1">
    <property type="protein sequence ID" value="Y47D3A.16.1"/>
    <property type="gene ID" value="WBGene00012929"/>
</dbReference>
<dbReference type="GeneID" id="176554"/>
<dbReference type="KEGG" id="cel:CELE_Y47D3A.16"/>
<dbReference type="UCSC" id="Y47D3A.16">
    <property type="organism name" value="c. elegans"/>
</dbReference>
<dbReference type="AGR" id="WB:WBGene00012929"/>
<dbReference type="CTD" id="176554"/>
<dbReference type="WormBase" id="Y47D3A.16">
    <property type="protein sequence ID" value="CE46969"/>
    <property type="gene ID" value="WBGene00012929"/>
    <property type="gene designation" value="rsks-1"/>
</dbReference>
<dbReference type="eggNOG" id="KOG0598">
    <property type="taxonomic scope" value="Eukaryota"/>
</dbReference>
<dbReference type="GeneTree" id="ENSGT00940000170375"/>
<dbReference type="HOGENOM" id="CLU_000288_63_5_1"/>
<dbReference type="InParanoid" id="Q9NAH6"/>
<dbReference type="OMA" id="VHTMNER"/>
<dbReference type="OrthoDB" id="63267at2759"/>
<dbReference type="PhylomeDB" id="Q9NAH6"/>
<dbReference type="Reactome" id="R-CEL-166208">
    <property type="pathway name" value="mTORC1-mediated signalling"/>
</dbReference>
<dbReference type="Reactome" id="R-CEL-198693">
    <property type="pathway name" value="AKT phosphorylates targets in the nucleus"/>
</dbReference>
<dbReference type="PRO" id="PR:Q9NAH6"/>
<dbReference type="Proteomes" id="UP000001940">
    <property type="component" value="Chromosome III"/>
</dbReference>
<dbReference type="Bgee" id="WBGene00012929">
    <property type="expression patterns" value="Expressed in larva and 3 other cell types or tissues"/>
</dbReference>
<dbReference type="GO" id="GO:0030424">
    <property type="term" value="C:axon"/>
    <property type="evidence" value="ECO:0007669"/>
    <property type="project" value="UniProtKB-SubCell"/>
</dbReference>
<dbReference type="GO" id="GO:0005737">
    <property type="term" value="C:cytoplasm"/>
    <property type="evidence" value="ECO:0000318"/>
    <property type="project" value="GO_Central"/>
</dbReference>
<dbReference type="GO" id="GO:0005654">
    <property type="term" value="C:nucleoplasm"/>
    <property type="evidence" value="ECO:0000318"/>
    <property type="project" value="GO_Central"/>
</dbReference>
<dbReference type="GO" id="GO:0043204">
    <property type="term" value="C:perikaryon"/>
    <property type="evidence" value="ECO:0007669"/>
    <property type="project" value="UniProtKB-SubCell"/>
</dbReference>
<dbReference type="GO" id="GO:0005524">
    <property type="term" value="F:ATP binding"/>
    <property type="evidence" value="ECO:0007669"/>
    <property type="project" value="UniProtKB-KW"/>
</dbReference>
<dbReference type="GO" id="GO:0046872">
    <property type="term" value="F:metal ion binding"/>
    <property type="evidence" value="ECO:0007669"/>
    <property type="project" value="UniProtKB-KW"/>
</dbReference>
<dbReference type="GO" id="GO:0106310">
    <property type="term" value="F:protein serine kinase activity"/>
    <property type="evidence" value="ECO:0007669"/>
    <property type="project" value="RHEA"/>
</dbReference>
<dbReference type="GO" id="GO:0004674">
    <property type="term" value="F:protein serine/threonine kinase activity"/>
    <property type="evidence" value="ECO:0000318"/>
    <property type="project" value="GO_Central"/>
</dbReference>
<dbReference type="GO" id="GO:0008340">
    <property type="term" value="P:determination of adult lifespan"/>
    <property type="evidence" value="ECO:0000315"/>
    <property type="project" value="WormBase"/>
</dbReference>
<dbReference type="GO" id="GO:0002119">
    <property type="term" value="P:nematode larval development"/>
    <property type="evidence" value="ECO:0000316"/>
    <property type="project" value="WormBase"/>
</dbReference>
<dbReference type="GO" id="GO:2000786">
    <property type="term" value="P:positive regulation of autophagosome assembly"/>
    <property type="evidence" value="ECO:0000315"/>
    <property type="project" value="BHF-UCL"/>
</dbReference>
<dbReference type="GO" id="GO:0010628">
    <property type="term" value="P:positive regulation of gene expression"/>
    <property type="evidence" value="ECO:0000316"/>
    <property type="project" value="UniProtKB"/>
</dbReference>
<dbReference type="GO" id="GO:0038202">
    <property type="term" value="P:TORC1 signaling"/>
    <property type="evidence" value="ECO:0000318"/>
    <property type="project" value="GO_Central"/>
</dbReference>
<dbReference type="CDD" id="cd05584">
    <property type="entry name" value="STKc_p70S6K"/>
    <property type="match status" value="1"/>
</dbReference>
<dbReference type="FunFam" id="3.30.200.20:FF:000587">
    <property type="entry name" value="Non-specific serine/threonine protein kinase"/>
    <property type="match status" value="1"/>
</dbReference>
<dbReference type="FunFam" id="1.10.510.10:FF:000092">
    <property type="entry name" value="Ribosomal protein S6 kinase"/>
    <property type="match status" value="1"/>
</dbReference>
<dbReference type="Gene3D" id="3.30.200.20">
    <property type="entry name" value="Phosphorylase Kinase, domain 1"/>
    <property type="match status" value="1"/>
</dbReference>
<dbReference type="Gene3D" id="1.10.510.10">
    <property type="entry name" value="Transferase(Phosphotransferase) domain 1"/>
    <property type="match status" value="1"/>
</dbReference>
<dbReference type="InterPro" id="IPR000961">
    <property type="entry name" value="AGC-kinase_C"/>
</dbReference>
<dbReference type="InterPro" id="IPR011009">
    <property type="entry name" value="Kinase-like_dom_sf"/>
</dbReference>
<dbReference type="InterPro" id="IPR017892">
    <property type="entry name" value="Pkinase_C"/>
</dbReference>
<dbReference type="InterPro" id="IPR000719">
    <property type="entry name" value="Prot_kinase_dom"/>
</dbReference>
<dbReference type="InterPro" id="IPR017441">
    <property type="entry name" value="Protein_kinase_ATP_BS"/>
</dbReference>
<dbReference type="InterPro" id="IPR016238">
    <property type="entry name" value="Ribosomal_S6_kinase"/>
</dbReference>
<dbReference type="InterPro" id="IPR008271">
    <property type="entry name" value="Ser/Thr_kinase_AS"/>
</dbReference>
<dbReference type="PANTHER" id="PTHR24351">
    <property type="entry name" value="RIBOSOMAL PROTEIN S6 KINASE"/>
    <property type="match status" value="1"/>
</dbReference>
<dbReference type="Pfam" id="PF00069">
    <property type="entry name" value="Pkinase"/>
    <property type="match status" value="1"/>
</dbReference>
<dbReference type="Pfam" id="PF00433">
    <property type="entry name" value="Pkinase_C"/>
    <property type="match status" value="1"/>
</dbReference>
<dbReference type="PIRSF" id="PIRSF000605">
    <property type="entry name" value="Ribsml_S6_kin_1"/>
    <property type="match status" value="1"/>
</dbReference>
<dbReference type="SMART" id="SM00133">
    <property type="entry name" value="S_TK_X"/>
    <property type="match status" value="1"/>
</dbReference>
<dbReference type="SMART" id="SM00220">
    <property type="entry name" value="S_TKc"/>
    <property type="match status" value="1"/>
</dbReference>
<dbReference type="SUPFAM" id="SSF56112">
    <property type="entry name" value="Protein kinase-like (PK-like)"/>
    <property type="match status" value="1"/>
</dbReference>
<dbReference type="PROSITE" id="PS51285">
    <property type="entry name" value="AGC_KINASE_CTER"/>
    <property type="match status" value="1"/>
</dbReference>
<dbReference type="PROSITE" id="PS00107">
    <property type="entry name" value="PROTEIN_KINASE_ATP"/>
    <property type="match status" value="1"/>
</dbReference>
<dbReference type="PROSITE" id="PS50011">
    <property type="entry name" value="PROTEIN_KINASE_DOM"/>
    <property type="match status" value="1"/>
</dbReference>
<dbReference type="PROSITE" id="PS00108">
    <property type="entry name" value="PROTEIN_KINASE_ST"/>
    <property type="match status" value="1"/>
</dbReference>
<name>KS6B_CAEEL</name>